<gene>
    <name type="primary">fepE</name>
    <name type="ordered locus">b0587</name>
    <name type="ordered locus">JW0579</name>
</gene>
<evidence type="ECO:0000255" key="1"/>
<evidence type="ECO:0000269" key="2">
    <source>
    </source>
</evidence>
<evidence type="ECO:0000305" key="3"/>
<sequence length="377" mass="42100">MSSLNIKQGSDAHFPDYPLASPSNNEIDLLNLISVLWRAKKTVMAVVFAFACAGLLISFILPQKWTSAAVVTPPEPVQWQELEKSFTKLRVLDLDIKIDRTEAFNLFIKKFQSVSLLEEYLRSSPYVMDQLKEAKIDELDLHRAIVALSEKMKAVDDNASKKKDEPSLYTSWTLSFTAPTSEEAQTVLSGYIDYISTLVVKESLENVRNKLEIKTQFEKEKLAQDRIKTKNQLDANIQRLNYSLDIANAAGIKKPVYSNGQAVKDDPDFSISLGADGIERKLEIEKAVTDVAELNGELRNRQYLVEQLTKAHVNDVNFTPFKYQLSPSLPVKKDGPGKAIIVILSALIGGMVACGGVLLRYAMASRKQDAMMADHLV</sequence>
<protein>
    <recommendedName>
        <fullName>Ferric enterobactin transport protein FepE</fullName>
    </recommendedName>
</protein>
<reference key="1">
    <citation type="submission" date="1993-07" db="EMBL/GenBank/DDBJ databases">
        <authorList>
            <person name="Shea Cleavinger C.M."/>
            <person name="Ozenberger B."/>
            <person name="McIntosh M."/>
        </authorList>
    </citation>
    <scope>NUCLEOTIDE SEQUENCE [GENOMIC DNA]</scope>
    <source>
        <strain>K12</strain>
    </source>
</reference>
<reference key="2">
    <citation type="submission" date="1997-01" db="EMBL/GenBank/DDBJ databases">
        <title>Sequence of minutes 4-25 of Escherichia coli.</title>
        <authorList>
            <person name="Chung E."/>
            <person name="Allen E."/>
            <person name="Araujo R."/>
            <person name="Aparicio A.M."/>
            <person name="Davis K."/>
            <person name="Duncan M."/>
            <person name="Federspiel N."/>
            <person name="Hyman R."/>
            <person name="Kalman S."/>
            <person name="Komp C."/>
            <person name="Kurdi O."/>
            <person name="Lew H."/>
            <person name="Lin D."/>
            <person name="Namath A."/>
            <person name="Oefner P."/>
            <person name="Roberts D."/>
            <person name="Schramm S."/>
            <person name="Davis R.W."/>
        </authorList>
    </citation>
    <scope>NUCLEOTIDE SEQUENCE [LARGE SCALE GENOMIC DNA]</scope>
    <source>
        <strain>K12 / MG1655 / ATCC 47076</strain>
    </source>
</reference>
<reference key="3">
    <citation type="journal article" date="1997" name="Science">
        <title>The complete genome sequence of Escherichia coli K-12.</title>
        <authorList>
            <person name="Blattner F.R."/>
            <person name="Plunkett G. III"/>
            <person name="Bloch C.A."/>
            <person name="Perna N.T."/>
            <person name="Burland V."/>
            <person name="Riley M."/>
            <person name="Collado-Vides J."/>
            <person name="Glasner J.D."/>
            <person name="Rode C.K."/>
            <person name="Mayhew G.F."/>
            <person name="Gregor J."/>
            <person name="Davis N.W."/>
            <person name="Kirkpatrick H.A."/>
            <person name="Goeden M.A."/>
            <person name="Rose D.J."/>
            <person name="Mau B."/>
            <person name="Shao Y."/>
        </authorList>
    </citation>
    <scope>NUCLEOTIDE SEQUENCE [LARGE SCALE GENOMIC DNA]</scope>
    <source>
        <strain>K12 / MG1655 / ATCC 47076</strain>
    </source>
</reference>
<reference key="4">
    <citation type="journal article" date="2006" name="Mol. Syst. Biol.">
        <title>Highly accurate genome sequences of Escherichia coli K-12 strains MG1655 and W3110.</title>
        <authorList>
            <person name="Hayashi K."/>
            <person name="Morooka N."/>
            <person name="Yamamoto Y."/>
            <person name="Fujita K."/>
            <person name="Isono K."/>
            <person name="Choi S."/>
            <person name="Ohtsubo E."/>
            <person name="Baba T."/>
            <person name="Wanner B.L."/>
            <person name="Mori H."/>
            <person name="Horiuchi T."/>
        </authorList>
    </citation>
    <scope>NUCLEOTIDE SEQUENCE [LARGE SCALE GENOMIC DNA]</scope>
    <source>
        <strain>K12 / W3110 / ATCC 27325 / DSM 5911</strain>
    </source>
</reference>
<reference key="5">
    <citation type="journal article" date="1991" name="Biochemistry">
        <title>Biosynthesis of the Escherichia coli siderophore enterobactin: sequence of the entF gene, expression and purification of EntF, and analysis of covalent phosphopantetheine.</title>
        <authorList>
            <person name="Rusnak F."/>
            <person name="Sakaitani M."/>
            <person name="Drueckhammer D."/>
            <person name="Reichert J."/>
            <person name="Walsh C.T."/>
        </authorList>
    </citation>
    <scope>NUCLEOTIDE SEQUENCE [GENOMIC DNA] OF 1-89</scope>
    <source>
        <strain>K12</strain>
    </source>
</reference>
<reference key="6">
    <citation type="journal article" date="2005" name="Science">
        <title>Global topology analysis of the Escherichia coli inner membrane proteome.</title>
        <authorList>
            <person name="Daley D.O."/>
            <person name="Rapp M."/>
            <person name="Granseth E."/>
            <person name="Melen K."/>
            <person name="Drew D."/>
            <person name="von Heijne G."/>
        </authorList>
    </citation>
    <scope>TOPOLOGY [LARGE SCALE ANALYSIS]</scope>
    <source>
        <strain>K12 / MG1655 / ATCC 47076</strain>
    </source>
</reference>
<reference key="7">
    <citation type="journal article" date="2009" name="J. Bacteriol.">
        <title>Involvement of the leucine response transcription factor LeuO in regulation of the genes for sulfa drug efflux.</title>
        <authorList>
            <person name="Shimada T."/>
            <person name="Yamamoto K."/>
            <person name="Ishihama A."/>
        </authorList>
    </citation>
    <scope>OPERON STRUCTURE</scope>
    <scope>INDUCTION</scope>
    <source>
        <strain>K12 / BW25113</strain>
    </source>
</reference>
<accession>P26266</accession>
<accession>Q2MBL4</accession>
<proteinExistence type="evidence at protein level"/>
<feature type="chain" id="PRO_0000087225" description="Ferric enterobactin transport protein FepE">
    <location>
        <begin position="1"/>
        <end position="377"/>
    </location>
</feature>
<feature type="topological domain" description="Cytoplasmic" evidence="1">
    <location>
        <begin position="1"/>
        <end position="41"/>
    </location>
</feature>
<feature type="transmembrane region" description="Helical" evidence="1">
    <location>
        <begin position="42"/>
        <end position="62"/>
    </location>
</feature>
<feature type="topological domain" description="Periplasmic" evidence="1">
    <location>
        <begin position="63"/>
        <end position="338"/>
    </location>
</feature>
<feature type="transmembrane region" description="Helical" evidence="1">
    <location>
        <begin position="339"/>
        <end position="359"/>
    </location>
</feature>
<feature type="topological domain" description="Cytoplasmic" evidence="1">
    <location>
        <begin position="360"/>
        <end position="377"/>
    </location>
</feature>
<dbReference type="EMBL" id="X74129">
    <property type="protein sequence ID" value="CAA52226.1"/>
    <property type="molecule type" value="Genomic_DNA"/>
</dbReference>
<dbReference type="EMBL" id="U82598">
    <property type="protein sequence ID" value="AAB40786.1"/>
    <property type="molecule type" value="Genomic_DNA"/>
</dbReference>
<dbReference type="EMBL" id="U00096">
    <property type="protein sequence ID" value="AAC73688.1"/>
    <property type="molecule type" value="Genomic_DNA"/>
</dbReference>
<dbReference type="EMBL" id="AP009048">
    <property type="protein sequence ID" value="BAE76342.1"/>
    <property type="molecule type" value="Genomic_DNA"/>
</dbReference>
<dbReference type="EMBL" id="M60177">
    <property type="status" value="NOT_ANNOTATED_CDS"/>
    <property type="molecule type" value="Genomic_DNA"/>
</dbReference>
<dbReference type="PIR" id="S34703">
    <property type="entry name" value="S34703"/>
</dbReference>
<dbReference type="RefSeq" id="NP_415119.1">
    <property type="nucleotide sequence ID" value="NC_000913.3"/>
</dbReference>
<dbReference type="SMR" id="P26266"/>
<dbReference type="BioGRID" id="4259898">
    <property type="interactions" value="150"/>
</dbReference>
<dbReference type="BioGRID" id="849566">
    <property type="interactions" value="4"/>
</dbReference>
<dbReference type="DIP" id="DIP-9596N"/>
<dbReference type="FunCoup" id="P26266">
    <property type="interactions" value="54"/>
</dbReference>
<dbReference type="IntAct" id="P26266">
    <property type="interactions" value="9"/>
</dbReference>
<dbReference type="STRING" id="511145.b0587"/>
<dbReference type="PaxDb" id="511145-b0587"/>
<dbReference type="EnsemblBacteria" id="AAC73688">
    <property type="protein sequence ID" value="AAC73688"/>
    <property type="gene ID" value="b0587"/>
</dbReference>
<dbReference type="GeneID" id="945180"/>
<dbReference type="KEGG" id="ecj:JW0579"/>
<dbReference type="KEGG" id="eco:b0587"/>
<dbReference type="KEGG" id="ecoc:C3026_02930"/>
<dbReference type="PATRIC" id="fig|1411691.4.peg.1682"/>
<dbReference type="EchoBASE" id="EB0293"/>
<dbReference type="eggNOG" id="COG3765">
    <property type="taxonomic scope" value="Bacteria"/>
</dbReference>
<dbReference type="HOGENOM" id="CLU_060925_3_0_6"/>
<dbReference type="InParanoid" id="P26266"/>
<dbReference type="OMA" id="EPFKYQL"/>
<dbReference type="OrthoDB" id="6565796at2"/>
<dbReference type="PhylomeDB" id="P26266"/>
<dbReference type="BioCyc" id="EcoCyc:EG10297-MONOMER"/>
<dbReference type="PRO" id="PR:P26266"/>
<dbReference type="Proteomes" id="UP000000625">
    <property type="component" value="Chromosome"/>
</dbReference>
<dbReference type="GO" id="GO:0005886">
    <property type="term" value="C:plasma membrane"/>
    <property type="evidence" value="ECO:0000314"/>
    <property type="project" value="EcoCyc"/>
</dbReference>
<dbReference type="GO" id="GO:0015620">
    <property type="term" value="F:ferric-enterobactin transmembrane transporter activity"/>
    <property type="evidence" value="ECO:0000315"/>
    <property type="project" value="EcoCyc"/>
</dbReference>
<dbReference type="GO" id="GO:0004713">
    <property type="term" value="F:protein tyrosine kinase activity"/>
    <property type="evidence" value="ECO:0000318"/>
    <property type="project" value="GO_Central"/>
</dbReference>
<dbReference type="GO" id="GO:0015685">
    <property type="term" value="P:ferric-enterobactin import into cell"/>
    <property type="evidence" value="ECO:0000315"/>
    <property type="project" value="EcoCyc"/>
</dbReference>
<dbReference type="FunFam" id="3.30.1890.10:FF:000003">
    <property type="entry name" value="Ferric enterobactin transport protein fepE"/>
    <property type="match status" value="1"/>
</dbReference>
<dbReference type="Gene3D" id="3.30.1890.10">
    <property type="entry name" value="FepE-like"/>
    <property type="match status" value="1"/>
</dbReference>
<dbReference type="InterPro" id="IPR050445">
    <property type="entry name" value="Bact_polysacc_biosynth/exp"/>
</dbReference>
<dbReference type="InterPro" id="IPR003856">
    <property type="entry name" value="LPS_length_determ_N_term"/>
</dbReference>
<dbReference type="NCBIfam" id="NF007699">
    <property type="entry name" value="PRK10381.1"/>
    <property type="match status" value="1"/>
</dbReference>
<dbReference type="PANTHER" id="PTHR32309:SF13">
    <property type="entry name" value="FERRIC ENTEROBACTIN TRANSPORT PROTEIN FEPE"/>
    <property type="match status" value="1"/>
</dbReference>
<dbReference type="PANTHER" id="PTHR32309">
    <property type="entry name" value="TYROSINE-PROTEIN KINASE"/>
    <property type="match status" value="1"/>
</dbReference>
<dbReference type="Pfam" id="PF02706">
    <property type="entry name" value="Wzz"/>
    <property type="match status" value="1"/>
</dbReference>
<dbReference type="SUPFAM" id="SSF160355">
    <property type="entry name" value="Bacterial polysaccharide co-polymerase-like"/>
    <property type="match status" value="1"/>
</dbReference>
<organism>
    <name type="scientific">Escherichia coli (strain K12)</name>
    <dbReference type="NCBI Taxonomy" id="83333"/>
    <lineage>
        <taxon>Bacteria</taxon>
        <taxon>Pseudomonadati</taxon>
        <taxon>Pseudomonadota</taxon>
        <taxon>Gammaproteobacteria</taxon>
        <taxon>Enterobacterales</taxon>
        <taxon>Enterobacteriaceae</taxon>
        <taxon>Escherichia</taxon>
    </lineage>
</organism>
<keyword id="KW-0997">Cell inner membrane</keyword>
<keyword id="KW-1003">Cell membrane</keyword>
<keyword id="KW-0406">Ion transport</keyword>
<keyword id="KW-0408">Iron</keyword>
<keyword id="KW-0410">Iron transport</keyword>
<keyword id="KW-0472">Membrane</keyword>
<keyword id="KW-1185">Reference proteome</keyword>
<keyword id="KW-0812">Transmembrane</keyword>
<keyword id="KW-1133">Transmembrane helix</keyword>
<keyword id="KW-0813">Transport</keyword>
<comment type="function">
    <text>Part of the ferric enterobactin transport system.</text>
</comment>
<comment type="subcellular location">
    <subcellularLocation>
        <location>Cell inner membrane</location>
        <topology>Multi-pass membrane protein</topology>
    </subcellularLocation>
</comment>
<comment type="induction">
    <text evidence="2">Repressed by H-NS, induced by LeuO. A monocistronic operon.</text>
</comment>
<comment type="similarity">
    <text evidence="3">Belongs to the WzzB/Cld/Rol family.</text>
</comment>
<name>FEPE_ECOLI</name>